<comment type="function">
    <text evidence="1">Protamines substitute for histones in the chromatin of sperm during the haploid phase of spermatogenesis. They compact sperm DNA into a highly condensed, stable and inactive complex.</text>
</comment>
<comment type="subunit">
    <text evidence="1">Interacts with TDRP.</text>
</comment>
<comment type="subcellular location">
    <subcellularLocation>
        <location evidence="1">Nucleus</location>
    </subcellularLocation>
    <subcellularLocation>
        <location evidence="1">Chromosome</location>
    </subcellularLocation>
</comment>
<comment type="tissue specificity">
    <text>Testis.</text>
</comment>
<comment type="PTM">
    <text evidence="1">Proteolytic processing into mature chains is required for histone eviction during spermatogenesis. Transition proteins (TNP1 and TNP2) are required for processing.</text>
</comment>
<comment type="similarity">
    <text evidence="4">Belongs to the protamine P2 family.</text>
</comment>
<name>PRM2_CALJA</name>
<evidence type="ECO:0000250" key="1">
    <source>
        <dbReference type="UniProtKB" id="P07978"/>
    </source>
</evidence>
<evidence type="ECO:0000250" key="2">
    <source>
        <dbReference type="UniProtKB" id="P11248"/>
    </source>
</evidence>
<evidence type="ECO:0000256" key="3">
    <source>
        <dbReference type="SAM" id="MobiDB-lite"/>
    </source>
</evidence>
<evidence type="ECO:0000305" key="4"/>
<proteinExistence type="evidence at transcript level"/>
<dbReference type="EMBL" id="X85371">
    <property type="protein sequence ID" value="CAA59687.1"/>
    <property type="molecule type" value="mRNA"/>
</dbReference>
<dbReference type="PIR" id="S53118">
    <property type="entry name" value="S53118"/>
</dbReference>
<dbReference type="RefSeq" id="NP_001244185.1">
    <property type="nucleotide sequence ID" value="NM_001257256.2"/>
</dbReference>
<dbReference type="FunCoup" id="Q28337">
    <property type="interactions" value="7"/>
</dbReference>
<dbReference type="STRING" id="9483.ENSCJAP00000051954"/>
<dbReference type="Ensembl" id="ENSCJAT00000063031.4">
    <property type="protein sequence ID" value="ENSCJAP00000051954.3"/>
    <property type="gene ID" value="ENSCJAG00000016052.5"/>
</dbReference>
<dbReference type="GeneID" id="100401666"/>
<dbReference type="KEGG" id="cjc:100401666"/>
<dbReference type="CTD" id="5620"/>
<dbReference type="eggNOG" id="ENOG502TD5P">
    <property type="taxonomic scope" value="Eukaryota"/>
</dbReference>
<dbReference type="GeneTree" id="ENSGT00940000163619"/>
<dbReference type="InParanoid" id="Q28337"/>
<dbReference type="OMA" id="PCAPIPG"/>
<dbReference type="Proteomes" id="UP000008225">
    <property type="component" value="Chromosome 12"/>
</dbReference>
<dbReference type="GO" id="GO:0001673">
    <property type="term" value="C:male germ cell nucleus"/>
    <property type="evidence" value="ECO:0007669"/>
    <property type="project" value="Ensembl"/>
</dbReference>
<dbReference type="GO" id="GO:0000786">
    <property type="term" value="C:nucleosome"/>
    <property type="evidence" value="ECO:0007669"/>
    <property type="project" value="UniProtKB-KW"/>
</dbReference>
<dbReference type="GO" id="GO:0046870">
    <property type="term" value="F:cadmium ion binding"/>
    <property type="evidence" value="ECO:0007669"/>
    <property type="project" value="Ensembl"/>
</dbReference>
<dbReference type="GO" id="GO:0003677">
    <property type="term" value="F:DNA binding"/>
    <property type="evidence" value="ECO:0007669"/>
    <property type="project" value="UniProtKB-KW"/>
</dbReference>
<dbReference type="GO" id="GO:0008270">
    <property type="term" value="F:zinc ion binding"/>
    <property type="evidence" value="ECO:0007669"/>
    <property type="project" value="Ensembl"/>
</dbReference>
<dbReference type="GO" id="GO:0030261">
    <property type="term" value="P:chromosome condensation"/>
    <property type="evidence" value="ECO:0007669"/>
    <property type="project" value="UniProtKB-KW"/>
</dbReference>
<dbReference type="GO" id="GO:0006997">
    <property type="term" value="P:nucleus organization"/>
    <property type="evidence" value="ECO:0007669"/>
    <property type="project" value="Ensembl"/>
</dbReference>
<dbReference type="GO" id="GO:0007286">
    <property type="term" value="P:spermatid development"/>
    <property type="evidence" value="ECO:0007669"/>
    <property type="project" value="Ensembl"/>
</dbReference>
<dbReference type="GO" id="GO:0007283">
    <property type="term" value="P:spermatogenesis"/>
    <property type="evidence" value="ECO:0000250"/>
    <property type="project" value="UniProtKB"/>
</dbReference>
<dbReference type="InterPro" id="IPR000492">
    <property type="entry name" value="PRM2"/>
</dbReference>
<dbReference type="PANTHER" id="PTHR21341">
    <property type="entry name" value="PROTAMINE-2"/>
    <property type="match status" value="1"/>
</dbReference>
<dbReference type="PANTHER" id="PTHR21341:SF2">
    <property type="entry name" value="PROTAMINE-2"/>
    <property type="match status" value="1"/>
</dbReference>
<dbReference type="Pfam" id="PF00841">
    <property type="entry name" value="Protamine_P2"/>
    <property type="match status" value="1"/>
</dbReference>
<keyword id="KW-0158">Chromosome</keyword>
<keyword id="KW-0217">Developmental protein</keyword>
<keyword id="KW-0221">Differentiation</keyword>
<keyword id="KW-0226">DNA condensation</keyword>
<keyword id="KW-0238">DNA-binding</keyword>
<keyword id="KW-0544">Nucleosome core</keyword>
<keyword id="KW-0539">Nucleus</keyword>
<keyword id="KW-0597">Phosphoprotein</keyword>
<keyword id="KW-1185">Reference proteome</keyword>
<keyword id="KW-0744">Spermatogenesis</keyword>
<organism>
    <name type="scientific">Callithrix jacchus</name>
    <name type="common">White-tufted-ear marmoset</name>
    <dbReference type="NCBI Taxonomy" id="9483"/>
    <lineage>
        <taxon>Eukaryota</taxon>
        <taxon>Metazoa</taxon>
        <taxon>Chordata</taxon>
        <taxon>Craniata</taxon>
        <taxon>Vertebrata</taxon>
        <taxon>Euteleostomi</taxon>
        <taxon>Mammalia</taxon>
        <taxon>Eutheria</taxon>
        <taxon>Euarchontoglires</taxon>
        <taxon>Primates</taxon>
        <taxon>Haplorrhini</taxon>
        <taxon>Platyrrhini</taxon>
        <taxon>Cebidae</taxon>
        <taxon>Callitrichinae</taxon>
        <taxon>Callithrix</taxon>
        <taxon>Callithrix</taxon>
    </lineage>
</organism>
<reference key="1">
    <citation type="journal article" date="1996" name="Int. J. Androl.">
        <title>Expression of protamine P2 in the testis of the common marmoset and man visualized using non-radioactive in-situ hybridization.</title>
        <authorList>
            <person name="Saunders P.T.K."/>
            <person name="Gaughan J."/>
            <person name="Saxty B.A."/>
            <person name="Kerr L.E."/>
            <person name="Millar M.R."/>
        </authorList>
    </citation>
    <scope>NUCLEOTIDE SEQUENCE [MRNA]</scope>
    <source>
        <tissue>Testis</tissue>
    </source>
</reference>
<sequence length="104" mass="13372">MVRYRVRSPSERPHEEYRQLVNWQEQGRNGQEEQGLSAEGGEVYGRTHQGYSSYRRRRCSRRRRYRIHRRRSRSCRRRRRRSCRYRRRPRRGCRSRRRRRCRRY</sequence>
<feature type="chain" id="PRO_0000191595" description="Protamine-2">
    <location>
        <begin position="1"/>
        <end position="104"/>
    </location>
</feature>
<feature type="region of interest" description="Disordered" evidence="3">
    <location>
        <begin position="23"/>
        <end position="104"/>
    </location>
</feature>
<feature type="compositionally biased region" description="Low complexity" evidence="3">
    <location>
        <begin position="24"/>
        <end position="35"/>
    </location>
</feature>
<feature type="compositionally biased region" description="Basic residues" evidence="3">
    <location>
        <begin position="54"/>
        <end position="104"/>
    </location>
</feature>
<feature type="modified residue" description="Phosphoserine" evidence="2">
    <location>
        <position position="8"/>
    </location>
</feature>
<feature type="modified residue" description="Phosphoserine" evidence="2">
    <location>
        <position position="10"/>
    </location>
</feature>
<feature type="modified residue" description="Phosphoserine" evidence="2">
    <location>
        <position position="37"/>
    </location>
</feature>
<gene>
    <name type="primary">PRM2</name>
</gene>
<accession>Q28337</accession>
<protein>
    <recommendedName>
        <fullName>Protamine-2</fullName>
    </recommendedName>
    <alternativeName>
        <fullName>Sperm histone P2</fullName>
    </alternativeName>
    <alternativeName>
        <fullName>Sperm protamine P2</fullName>
    </alternativeName>
</protein>